<keyword id="KW-0963">Cytoplasm</keyword>
<keyword id="KW-0251">Elongation factor</keyword>
<keyword id="KW-0648">Protein biosynthesis</keyword>
<proteinExistence type="inferred from homology"/>
<gene>
    <name evidence="1" type="primary">efp</name>
    <name type="ordered locus">RT0230</name>
</gene>
<reference key="1">
    <citation type="journal article" date="2004" name="J. Bacteriol.">
        <title>Complete genome sequence of Rickettsia typhi and comparison with sequences of other Rickettsiae.</title>
        <authorList>
            <person name="McLeod M.P."/>
            <person name="Qin X."/>
            <person name="Karpathy S.E."/>
            <person name="Gioia J."/>
            <person name="Highlander S.K."/>
            <person name="Fox G.E."/>
            <person name="McNeill T.Z."/>
            <person name="Jiang H."/>
            <person name="Muzny D."/>
            <person name="Jacob L.S."/>
            <person name="Hawes A.C."/>
            <person name="Sodergren E."/>
            <person name="Gill R."/>
            <person name="Hume J."/>
            <person name="Morgan M."/>
            <person name="Fan G."/>
            <person name="Amin A.G."/>
            <person name="Gibbs R.A."/>
            <person name="Hong C."/>
            <person name="Yu X.-J."/>
            <person name="Walker D.H."/>
            <person name="Weinstock G.M."/>
        </authorList>
    </citation>
    <scope>NUCLEOTIDE SEQUENCE [LARGE SCALE GENOMIC DNA]</scope>
    <source>
        <strain>ATCC VR-144 / Wilmington</strain>
    </source>
</reference>
<name>EFP_RICTY</name>
<comment type="function">
    <text evidence="1">Involved in peptide bond synthesis. Stimulates efficient translation and peptide-bond synthesis on native or reconstituted 70S ribosomes in vitro. Probably functions indirectly by altering the affinity of the ribosome for aminoacyl-tRNA, thus increasing their reactivity as acceptors for peptidyl transferase.</text>
</comment>
<comment type="pathway">
    <text evidence="1">Protein biosynthesis; polypeptide chain elongation.</text>
</comment>
<comment type="subcellular location">
    <subcellularLocation>
        <location evidence="1">Cytoplasm</location>
    </subcellularLocation>
</comment>
<comment type="similarity">
    <text evidence="1">Belongs to the elongation factor P family.</text>
</comment>
<accession>Q68XD1</accession>
<organism>
    <name type="scientific">Rickettsia typhi (strain ATCC VR-144 / Wilmington)</name>
    <dbReference type="NCBI Taxonomy" id="257363"/>
    <lineage>
        <taxon>Bacteria</taxon>
        <taxon>Pseudomonadati</taxon>
        <taxon>Pseudomonadota</taxon>
        <taxon>Alphaproteobacteria</taxon>
        <taxon>Rickettsiales</taxon>
        <taxon>Rickettsiaceae</taxon>
        <taxon>Rickettsieae</taxon>
        <taxon>Rickettsia</taxon>
        <taxon>typhus group</taxon>
    </lineage>
</organism>
<evidence type="ECO:0000255" key="1">
    <source>
        <dbReference type="HAMAP-Rule" id="MF_00141"/>
    </source>
</evidence>
<protein>
    <recommendedName>
        <fullName evidence="1">Elongation factor P</fullName>
        <shortName evidence="1">EF-P</shortName>
    </recommendedName>
</protein>
<dbReference type="EMBL" id="AE017197">
    <property type="protein sequence ID" value="AAU03711.1"/>
    <property type="molecule type" value="Genomic_DNA"/>
</dbReference>
<dbReference type="RefSeq" id="WP_011190697.1">
    <property type="nucleotide sequence ID" value="NC_006142.1"/>
</dbReference>
<dbReference type="SMR" id="Q68XD1"/>
<dbReference type="KEGG" id="rty:RT0230"/>
<dbReference type="eggNOG" id="COG0231">
    <property type="taxonomic scope" value="Bacteria"/>
</dbReference>
<dbReference type="HOGENOM" id="CLU_074944_1_1_5"/>
<dbReference type="OrthoDB" id="9801844at2"/>
<dbReference type="UniPathway" id="UPA00345"/>
<dbReference type="Proteomes" id="UP000000604">
    <property type="component" value="Chromosome"/>
</dbReference>
<dbReference type="GO" id="GO:0005737">
    <property type="term" value="C:cytoplasm"/>
    <property type="evidence" value="ECO:0007669"/>
    <property type="project" value="UniProtKB-SubCell"/>
</dbReference>
<dbReference type="GO" id="GO:0003746">
    <property type="term" value="F:translation elongation factor activity"/>
    <property type="evidence" value="ECO:0007669"/>
    <property type="project" value="UniProtKB-UniRule"/>
</dbReference>
<dbReference type="GO" id="GO:0043043">
    <property type="term" value="P:peptide biosynthetic process"/>
    <property type="evidence" value="ECO:0007669"/>
    <property type="project" value="InterPro"/>
</dbReference>
<dbReference type="CDD" id="cd04470">
    <property type="entry name" value="S1_EF-P_repeat_1"/>
    <property type="match status" value="1"/>
</dbReference>
<dbReference type="FunFam" id="2.40.50.140:FF:000004">
    <property type="entry name" value="Elongation factor P"/>
    <property type="match status" value="1"/>
</dbReference>
<dbReference type="FunFam" id="2.40.50.140:FF:000009">
    <property type="entry name" value="Elongation factor P"/>
    <property type="match status" value="1"/>
</dbReference>
<dbReference type="Gene3D" id="2.30.30.30">
    <property type="match status" value="1"/>
</dbReference>
<dbReference type="Gene3D" id="2.40.50.140">
    <property type="entry name" value="Nucleic acid-binding proteins"/>
    <property type="match status" value="2"/>
</dbReference>
<dbReference type="HAMAP" id="MF_00141">
    <property type="entry name" value="EF_P"/>
    <property type="match status" value="1"/>
</dbReference>
<dbReference type="InterPro" id="IPR015365">
    <property type="entry name" value="Elong-fact-P_C"/>
</dbReference>
<dbReference type="InterPro" id="IPR012340">
    <property type="entry name" value="NA-bd_OB-fold"/>
</dbReference>
<dbReference type="InterPro" id="IPR014722">
    <property type="entry name" value="Rib_uL2_dom2"/>
</dbReference>
<dbReference type="InterPro" id="IPR020599">
    <property type="entry name" value="Transl_elong_fac_P/YeiP"/>
</dbReference>
<dbReference type="InterPro" id="IPR013185">
    <property type="entry name" value="Transl_elong_KOW-like"/>
</dbReference>
<dbReference type="InterPro" id="IPR001059">
    <property type="entry name" value="Transl_elong_P/YeiP_cen"/>
</dbReference>
<dbReference type="InterPro" id="IPR013852">
    <property type="entry name" value="Transl_elong_P/YeiP_CS"/>
</dbReference>
<dbReference type="InterPro" id="IPR011768">
    <property type="entry name" value="Transl_elongation_fac_P"/>
</dbReference>
<dbReference type="InterPro" id="IPR008991">
    <property type="entry name" value="Translation_prot_SH3-like_sf"/>
</dbReference>
<dbReference type="NCBIfam" id="TIGR00038">
    <property type="entry name" value="efp"/>
    <property type="match status" value="1"/>
</dbReference>
<dbReference type="NCBIfam" id="NF001810">
    <property type="entry name" value="PRK00529.1"/>
    <property type="match status" value="1"/>
</dbReference>
<dbReference type="PANTHER" id="PTHR30053">
    <property type="entry name" value="ELONGATION FACTOR P"/>
    <property type="match status" value="1"/>
</dbReference>
<dbReference type="PANTHER" id="PTHR30053:SF14">
    <property type="entry name" value="TRANSLATION ELONGATION FACTOR KOW-LIKE DOMAIN-CONTAINING PROTEIN"/>
    <property type="match status" value="1"/>
</dbReference>
<dbReference type="Pfam" id="PF01132">
    <property type="entry name" value="EFP"/>
    <property type="match status" value="1"/>
</dbReference>
<dbReference type="Pfam" id="PF08207">
    <property type="entry name" value="EFP_N"/>
    <property type="match status" value="1"/>
</dbReference>
<dbReference type="Pfam" id="PF09285">
    <property type="entry name" value="Elong-fact-P_C"/>
    <property type="match status" value="1"/>
</dbReference>
<dbReference type="PIRSF" id="PIRSF005901">
    <property type="entry name" value="EF-P"/>
    <property type="match status" value="1"/>
</dbReference>
<dbReference type="SMART" id="SM01185">
    <property type="entry name" value="EFP"/>
    <property type="match status" value="1"/>
</dbReference>
<dbReference type="SMART" id="SM00841">
    <property type="entry name" value="Elong-fact-P_C"/>
    <property type="match status" value="1"/>
</dbReference>
<dbReference type="SUPFAM" id="SSF50249">
    <property type="entry name" value="Nucleic acid-binding proteins"/>
    <property type="match status" value="2"/>
</dbReference>
<dbReference type="SUPFAM" id="SSF50104">
    <property type="entry name" value="Translation proteins SH3-like domain"/>
    <property type="match status" value="1"/>
</dbReference>
<dbReference type="PROSITE" id="PS01275">
    <property type="entry name" value="EFP"/>
    <property type="match status" value="1"/>
</dbReference>
<feature type="chain" id="PRO_0000094321" description="Elongation factor P">
    <location>
        <begin position="1"/>
        <end position="188"/>
    </location>
</feature>
<sequence length="188" mass="21155">MKISANSIRTGNILVYNNDLWVVSKTPEHTQPGKGGAYVQVEMKNLKTGTKRNGRFSSSDYLEKAELEQKDCQFLYFEGNNLVLMDTKHFDQINVPKEILEAKLPFLTENMIVKVEFYNDKPLTIVLPPTVILAISETDPVIKGATVTSSYKPAILENGIKVKVPQYLAIGEKIVVKTDDMTYVERAK</sequence>